<reference key="1">
    <citation type="journal article" date="2008" name="Genome Res.">
        <title>Chlamydia trachomatis: genome sequence analysis of lymphogranuloma venereum isolates.</title>
        <authorList>
            <person name="Thomson N.R."/>
            <person name="Holden M.T.G."/>
            <person name="Carder C."/>
            <person name="Lennard N."/>
            <person name="Lockey S.J."/>
            <person name="Marsh P."/>
            <person name="Skipp P."/>
            <person name="O'Connor C.D."/>
            <person name="Goodhead I."/>
            <person name="Norbertzcak H."/>
            <person name="Harris B."/>
            <person name="Ormond D."/>
            <person name="Rance R."/>
            <person name="Quail M.A."/>
            <person name="Parkhill J."/>
            <person name="Stephens R.S."/>
            <person name="Clarke I.N."/>
        </authorList>
    </citation>
    <scope>NUCLEOTIDE SEQUENCE [LARGE SCALE GENOMIC DNA]</scope>
    <source>
        <strain>UCH-1/proctitis</strain>
    </source>
</reference>
<accession>B0BC12</accession>
<feature type="chain" id="PRO_1000125706" description="Glucose-6-phosphate isomerase">
    <location>
        <begin position="1"/>
        <end position="525"/>
    </location>
</feature>
<feature type="active site" description="Proton donor" evidence="1">
    <location>
        <position position="347"/>
    </location>
</feature>
<feature type="active site" evidence="1">
    <location>
        <position position="378"/>
    </location>
</feature>
<feature type="active site" evidence="1">
    <location>
        <position position="493"/>
    </location>
</feature>
<proteinExistence type="inferred from homology"/>
<sequence length="525" mass="57700">MMGKGFLDCESLVALQEMALHPIDLTASGCLSEERIQKNSLSVEGFTYSYATERVDDRCLEALQGLTEERELIKQMECMQQGAIMNRIEGFQSESRPVLHTATRAWVRDQDLHEEAAAIARHSKEEALRLAEFLYIARAKFSTLVQIGIGGSELGPKAMYFAMQGSCPSDKRIFFVSNIDPDNAAEVLREIDLEQTLVVVVSKSGTTLEPAANEELFRQAYQNKGLSIAEHFVAVTSQGSPMDDKSRYLEVFHLWDSIGGRFSATSMVGGVVLGFAFGYEAFIEFLQGAAAIDAHALTPKMRENLPLLSAMLGVWNRNLLGYPTTAVIPYSTGLKYFTAHLQQCGMESNGKSISREGKEISFRTSPIIWGDVGTNCQHSFFQSLHQGTDIVPVEFIGFLHNQRGLDCVLSGSSSSQKLFANLVAQSLALAQGRDNANPNKRFKGNSPSSILVAQQLSPRIAGSLLAFYEHKFAFQGFCWGINSFDQEGVSLGKELATQIIGIMSGNAPVEFPEARGVLRLFNVLT</sequence>
<evidence type="ECO:0000255" key="1">
    <source>
        <dbReference type="HAMAP-Rule" id="MF_00473"/>
    </source>
</evidence>
<name>G6PI_CHLTB</name>
<protein>
    <recommendedName>
        <fullName evidence="1">Glucose-6-phosphate isomerase</fullName>
        <shortName evidence="1">GPI</shortName>
        <ecNumber evidence="1">5.3.1.9</ecNumber>
    </recommendedName>
    <alternativeName>
        <fullName evidence="1">Phosphoglucose isomerase</fullName>
        <shortName evidence="1">PGI</shortName>
    </alternativeName>
    <alternativeName>
        <fullName evidence="1">Phosphohexose isomerase</fullName>
        <shortName evidence="1">PHI</shortName>
    </alternativeName>
</protein>
<keyword id="KW-0963">Cytoplasm</keyword>
<keyword id="KW-0312">Gluconeogenesis</keyword>
<keyword id="KW-0324">Glycolysis</keyword>
<keyword id="KW-0413">Isomerase</keyword>
<comment type="function">
    <text evidence="1">Catalyzes the reversible isomerization of glucose-6-phosphate to fructose-6-phosphate.</text>
</comment>
<comment type="catalytic activity">
    <reaction evidence="1">
        <text>alpha-D-glucose 6-phosphate = beta-D-fructose 6-phosphate</text>
        <dbReference type="Rhea" id="RHEA:11816"/>
        <dbReference type="ChEBI" id="CHEBI:57634"/>
        <dbReference type="ChEBI" id="CHEBI:58225"/>
        <dbReference type="EC" id="5.3.1.9"/>
    </reaction>
</comment>
<comment type="pathway">
    <text evidence="1">Carbohydrate biosynthesis; gluconeogenesis.</text>
</comment>
<comment type="pathway">
    <text evidence="1">Carbohydrate degradation; glycolysis; D-glyceraldehyde 3-phosphate and glycerone phosphate from D-glucose: step 2/4.</text>
</comment>
<comment type="subcellular location">
    <subcellularLocation>
        <location evidence="1">Cytoplasm</location>
    </subcellularLocation>
</comment>
<comment type="similarity">
    <text evidence="1">Belongs to the GPI family.</text>
</comment>
<gene>
    <name evidence="1" type="primary">pgi</name>
    <name type="ordered locus">CTLon_0630</name>
</gene>
<organism>
    <name type="scientific">Chlamydia trachomatis serovar L2b (strain UCH-1/proctitis)</name>
    <dbReference type="NCBI Taxonomy" id="471473"/>
    <lineage>
        <taxon>Bacteria</taxon>
        <taxon>Pseudomonadati</taxon>
        <taxon>Chlamydiota</taxon>
        <taxon>Chlamydiia</taxon>
        <taxon>Chlamydiales</taxon>
        <taxon>Chlamydiaceae</taxon>
        <taxon>Chlamydia/Chlamydophila group</taxon>
        <taxon>Chlamydia</taxon>
    </lineage>
</organism>
<dbReference type="EC" id="5.3.1.9" evidence="1"/>
<dbReference type="EMBL" id="AM884177">
    <property type="protein sequence ID" value="CAP07027.1"/>
    <property type="molecule type" value="Genomic_DNA"/>
</dbReference>
<dbReference type="RefSeq" id="WP_009873769.1">
    <property type="nucleotide sequence ID" value="NC_010280.2"/>
</dbReference>
<dbReference type="SMR" id="B0BC12"/>
<dbReference type="KEGG" id="ctl:CTLon_0630"/>
<dbReference type="HOGENOM" id="CLU_017947_3_1_0"/>
<dbReference type="UniPathway" id="UPA00109">
    <property type="reaction ID" value="UER00181"/>
</dbReference>
<dbReference type="UniPathway" id="UPA00138"/>
<dbReference type="Proteomes" id="UP001154401">
    <property type="component" value="Chromosome"/>
</dbReference>
<dbReference type="GO" id="GO:0005829">
    <property type="term" value="C:cytosol"/>
    <property type="evidence" value="ECO:0007669"/>
    <property type="project" value="TreeGrafter"/>
</dbReference>
<dbReference type="GO" id="GO:0097367">
    <property type="term" value="F:carbohydrate derivative binding"/>
    <property type="evidence" value="ECO:0007669"/>
    <property type="project" value="InterPro"/>
</dbReference>
<dbReference type="GO" id="GO:0004347">
    <property type="term" value="F:glucose-6-phosphate isomerase activity"/>
    <property type="evidence" value="ECO:0007669"/>
    <property type="project" value="UniProtKB-UniRule"/>
</dbReference>
<dbReference type="GO" id="GO:0048029">
    <property type="term" value="F:monosaccharide binding"/>
    <property type="evidence" value="ECO:0007669"/>
    <property type="project" value="TreeGrafter"/>
</dbReference>
<dbReference type="GO" id="GO:0006094">
    <property type="term" value="P:gluconeogenesis"/>
    <property type="evidence" value="ECO:0007669"/>
    <property type="project" value="UniProtKB-UniRule"/>
</dbReference>
<dbReference type="GO" id="GO:0051156">
    <property type="term" value="P:glucose 6-phosphate metabolic process"/>
    <property type="evidence" value="ECO:0007669"/>
    <property type="project" value="TreeGrafter"/>
</dbReference>
<dbReference type="GO" id="GO:0006096">
    <property type="term" value="P:glycolytic process"/>
    <property type="evidence" value="ECO:0007669"/>
    <property type="project" value="UniProtKB-UniRule"/>
</dbReference>
<dbReference type="CDD" id="cd05015">
    <property type="entry name" value="SIS_PGI_1"/>
    <property type="match status" value="1"/>
</dbReference>
<dbReference type="CDD" id="cd05016">
    <property type="entry name" value="SIS_PGI_2"/>
    <property type="match status" value="1"/>
</dbReference>
<dbReference type="Gene3D" id="1.10.1390.10">
    <property type="match status" value="1"/>
</dbReference>
<dbReference type="Gene3D" id="3.40.50.10490">
    <property type="entry name" value="Glucose-6-phosphate isomerase like protein, domain 1"/>
    <property type="match status" value="2"/>
</dbReference>
<dbReference type="HAMAP" id="MF_00473">
    <property type="entry name" value="G6P_isomerase"/>
    <property type="match status" value="1"/>
</dbReference>
<dbReference type="InterPro" id="IPR001672">
    <property type="entry name" value="G6P_Isomerase"/>
</dbReference>
<dbReference type="InterPro" id="IPR023096">
    <property type="entry name" value="G6P_Isomerase_C"/>
</dbReference>
<dbReference type="InterPro" id="IPR018189">
    <property type="entry name" value="Phosphoglucose_isomerase_CS"/>
</dbReference>
<dbReference type="InterPro" id="IPR046348">
    <property type="entry name" value="SIS_dom_sf"/>
</dbReference>
<dbReference type="InterPro" id="IPR035476">
    <property type="entry name" value="SIS_PGI_1"/>
</dbReference>
<dbReference type="InterPro" id="IPR035482">
    <property type="entry name" value="SIS_PGI_2"/>
</dbReference>
<dbReference type="NCBIfam" id="NF010695">
    <property type="entry name" value="PRK14095.1"/>
    <property type="match status" value="1"/>
</dbReference>
<dbReference type="PANTHER" id="PTHR11469">
    <property type="entry name" value="GLUCOSE-6-PHOSPHATE ISOMERASE"/>
    <property type="match status" value="1"/>
</dbReference>
<dbReference type="PANTHER" id="PTHR11469:SF1">
    <property type="entry name" value="GLUCOSE-6-PHOSPHATE ISOMERASE"/>
    <property type="match status" value="1"/>
</dbReference>
<dbReference type="Pfam" id="PF00342">
    <property type="entry name" value="PGI"/>
    <property type="match status" value="1"/>
</dbReference>
<dbReference type="PRINTS" id="PR00662">
    <property type="entry name" value="G6PISOMERASE"/>
</dbReference>
<dbReference type="SUPFAM" id="SSF53697">
    <property type="entry name" value="SIS domain"/>
    <property type="match status" value="1"/>
</dbReference>
<dbReference type="PROSITE" id="PS00765">
    <property type="entry name" value="P_GLUCOSE_ISOMERASE_1"/>
    <property type="match status" value="1"/>
</dbReference>
<dbReference type="PROSITE" id="PS00174">
    <property type="entry name" value="P_GLUCOSE_ISOMERASE_2"/>
    <property type="match status" value="1"/>
</dbReference>
<dbReference type="PROSITE" id="PS51463">
    <property type="entry name" value="P_GLUCOSE_ISOMERASE_3"/>
    <property type="match status" value="1"/>
</dbReference>